<accession>A8Z057</accession>
<dbReference type="EMBL" id="CP000730">
    <property type="protein sequence ID" value="ABX28931.1"/>
    <property type="molecule type" value="Genomic_DNA"/>
</dbReference>
<dbReference type="RefSeq" id="WP_000402803.1">
    <property type="nucleotide sequence ID" value="NC_010079.1"/>
</dbReference>
<dbReference type="SMR" id="A8Z057"/>
<dbReference type="GeneID" id="98345271"/>
<dbReference type="KEGG" id="sax:USA300HOU_0910"/>
<dbReference type="HOGENOM" id="CLU_082058_3_1_9"/>
<dbReference type="GO" id="GO:0005886">
    <property type="term" value="C:plasma membrane"/>
    <property type="evidence" value="ECO:0007669"/>
    <property type="project" value="UniProtKB-SubCell"/>
</dbReference>
<dbReference type="GO" id="GO:0015297">
    <property type="term" value="F:antiporter activity"/>
    <property type="evidence" value="ECO:0007669"/>
    <property type="project" value="UniProtKB-KW"/>
</dbReference>
<dbReference type="GO" id="GO:0008324">
    <property type="term" value="F:monoatomic cation transmembrane transporter activity"/>
    <property type="evidence" value="ECO:0007669"/>
    <property type="project" value="InterPro"/>
</dbReference>
<dbReference type="GO" id="GO:1902600">
    <property type="term" value="P:proton transmembrane transport"/>
    <property type="evidence" value="ECO:0007669"/>
    <property type="project" value="UniProtKB-KW"/>
</dbReference>
<dbReference type="GO" id="GO:0006814">
    <property type="term" value="P:sodium ion transport"/>
    <property type="evidence" value="ECO:0007669"/>
    <property type="project" value="UniProtKB-KW"/>
</dbReference>
<dbReference type="Gene3D" id="1.10.287.3510">
    <property type="match status" value="1"/>
</dbReference>
<dbReference type="InterPro" id="IPR050601">
    <property type="entry name" value="CPA3_antiporter_subunitC"/>
</dbReference>
<dbReference type="InterPro" id="IPR006673">
    <property type="entry name" value="Mnh_C1_su"/>
</dbReference>
<dbReference type="InterPro" id="IPR039428">
    <property type="entry name" value="NUOK/Mnh_C1-like"/>
</dbReference>
<dbReference type="NCBIfam" id="TIGR00941">
    <property type="entry name" value="2a6301s03"/>
    <property type="match status" value="1"/>
</dbReference>
<dbReference type="NCBIfam" id="NF006372">
    <property type="entry name" value="PRK08600.1"/>
    <property type="match status" value="1"/>
</dbReference>
<dbReference type="NCBIfam" id="NF006573">
    <property type="entry name" value="PRK09094.1"/>
    <property type="match status" value="1"/>
</dbReference>
<dbReference type="NCBIfam" id="NF009303">
    <property type="entry name" value="PRK12660.1"/>
    <property type="match status" value="1"/>
</dbReference>
<dbReference type="PANTHER" id="PTHR34583">
    <property type="entry name" value="ANTIPORTER SUBUNIT MNHC2-RELATED"/>
    <property type="match status" value="1"/>
</dbReference>
<dbReference type="PANTHER" id="PTHR34583:SF2">
    <property type="entry name" value="ANTIPORTER SUBUNIT MNHC2-RELATED"/>
    <property type="match status" value="1"/>
</dbReference>
<dbReference type="Pfam" id="PF00420">
    <property type="entry name" value="Oxidored_q2"/>
    <property type="match status" value="1"/>
</dbReference>
<feature type="chain" id="PRO_0000372123" description="Na(+)/H(+) antiporter subunit C1">
    <location>
        <begin position="1"/>
        <end position="113"/>
    </location>
</feature>
<feature type="transmembrane region" description="Helical" evidence="2">
    <location>
        <begin position="1"/>
        <end position="21"/>
    </location>
</feature>
<feature type="transmembrane region" description="Helical" evidence="2">
    <location>
        <begin position="28"/>
        <end position="48"/>
    </location>
</feature>
<feature type="transmembrane region" description="Helical" evidence="2">
    <location>
        <begin position="72"/>
        <end position="92"/>
    </location>
</feature>
<gene>
    <name type="primary">mnhC1</name>
    <name type="ordered locus">USA300HOU_0910</name>
</gene>
<protein>
    <recommendedName>
        <fullName>Na(+)/H(+) antiporter subunit C1</fullName>
    </recommendedName>
    <alternativeName>
        <fullName>Mnh complex subunit C1</fullName>
    </alternativeName>
</protein>
<organism>
    <name type="scientific">Staphylococcus aureus (strain USA300 / TCH1516)</name>
    <dbReference type="NCBI Taxonomy" id="451516"/>
    <lineage>
        <taxon>Bacteria</taxon>
        <taxon>Bacillati</taxon>
        <taxon>Bacillota</taxon>
        <taxon>Bacilli</taxon>
        <taxon>Bacillales</taxon>
        <taxon>Staphylococcaceae</taxon>
        <taxon>Staphylococcus</taxon>
    </lineage>
</organism>
<name>MNHC1_STAAT</name>
<reference key="1">
    <citation type="journal article" date="2007" name="BMC Microbiol.">
        <title>Subtle genetic changes enhance virulence of methicillin resistant and sensitive Staphylococcus aureus.</title>
        <authorList>
            <person name="Highlander S.K."/>
            <person name="Hulten K.G."/>
            <person name="Qin X."/>
            <person name="Jiang H."/>
            <person name="Yerrapragada S."/>
            <person name="Mason E.O. Jr."/>
            <person name="Shang Y."/>
            <person name="Williams T.M."/>
            <person name="Fortunov R.M."/>
            <person name="Liu Y."/>
            <person name="Igboeli O."/>
            <person name="Petrosino J."/>
            <person name="Tirumalai M."/>
            <person name="Uzman A."/>
            <person name="Fox G.E."/>
            <person name="Cardenas A.M."/>
            <person name="Muzny D.M."/>
            <person name="Hemphill L."/>
            <person name="Ding Y."/>
            <person name="Dugan S."/>
            <person name="Blyth P.R."/>
            <person name="Buhay C.J."/>
            <person name="Dinh H.H."/>
            <person name="Hawes A.C."/>
            <person name="Holder M."/>
            <person name="Kovar C.L."/>
            <person name="Lee S.L."/>
            <person name="Liu W."/>
            <person name="Nazareth L.V."/>
            <person name="Wang Q."/>
            <person name="Zhou J."/>
            <person name="Kaplan S.L."/>
            <person name="Weinstock G.M."/>
        </authorList>
    </citation>
    <scope>NUCLEOTIDE SEQUENCE [LARGE SCALE GENOMIC DNA]</scope>
    <source>
        <strain>USA300 / TCH1516</strain>
    </source>
</reference>
<keyword id="KW-0050">Antiport</keyword>
<keyword id="KW-1003">Cell membrane</keyword>
<keyword id="KW-0375">Hydrogen ion transport</keyword>
<keyword id="KW-0406">Ion transport</keyword>
<keyword id="KW-0472">Membrane</keyword>
<keyword id="KW-0915">Sodium</keyword>
<keyword id="KW-0739">Sodium transport</keyword>
<keyword id="KW-0812">Transmembrane</keyword>
<keyword id="KW-1133">Transmembrane helix</keyword>
<keyword id="KW-0813">Transport</keyword>
<comment type="function">
    <text evidence="1">Mnh complex is a Na(+)/H(+) antiporter involved in Na(+) excretion.</text>
</comment>
<comment type="subunit">
    <text evidence="1">May form a heterooligomeric complex that consists of seven subunits: mnhA1, mnhB1, mnhC1, mnhD1, mnhE1, mnhF1 and mnhG1.</text>
</comment>
<comment type="subcellular location">
    <subcellularLocation>
        <location evidence="3">Cell membrane</location>
        <topology evidence="3">Multi-pass membrane protein</topology>
    </subcellularLocation>
</comment>
<comment type="similarity">
    <text evidence="3">Belongs to the CPA3 antiporters (TC 2.A.63) subunit C family.</text>
</comment>
<proteinExistence type="inferred from homology"/>
<sequence length="113" mass="12293">MEIIMIFVSGILTAISVYLVLSKSLIRIVMGTTLLTHAANLFLITMGGLKHGTVPIYEANVKSYVDPIPQALILTAIVIAFATTAFFLVLAFRTYKELGTDNVESMKGVPEDD</sequence>
<evidence type="ECO:0000250" key="1"/>
<evidence type="ECO:0000255" key="2"/>
<evidence type="ECO:0000305" key="3"/>